<dbReference type="EC" id="2.4.2.1" evidence="1"/>
<dbReference type="EC" id="2.4.2.2" evidence="1"/>
<dbReference type="EMBL" id="CP000563">
    <property type="protein sequence ID" value="ABN59806.1"/>
    <property type="molecule type" value="Genomic_DNA"/>
</dbReference>
<dbReference type="RefSeq" id="WP_011845529.1">
    <property type="nucleotide sequence ID" value="NC_009052.1"/>
</dbReference>
<dbReference type="SMR" id="A3CZ93"/>
<dbReference type="STRING" id="325240.Sbal_0273"/>
<dbReference type="KEGG" id="sbl:Sbal_0273"/>
<dbReference type="HOGENOM" id="CLU_157874_1_0_6"/>
<dbReference type="OrthoDB" id="9793848at2"/>
<dbReference type="Proteomes" id="UP000001557">
    <property type="component" value="Chromosome"/>
</dbReference>
<dbReference type="GO" id="GO:0005829">
    <property type="term" value="C:cytosol"/>
    <property type="evidence" value="ECO:0007669"/>
    <property type="project" value="TreeGrafter"/>
</dbReference>
<dbReference type="GO" id="GO:0047975">
    <property type="term" value="F:guanosine phosphorylase activity"/>
    <property type="evidence" value="ECO:0007669"/>
    <property type="project" value="UniProtKB-EC"/>
</dbReference>
<dbReference type="GO" id="GO:0004731">
    <property type="term" value="F:purine-nucleoside phosphorylase activity"/>
    <property type="evidence" value="ECO:0007669"/>
    <property type="project" value="UniProtKB-UniRule"/>
</dbReference>
<dbReference type="GO" id="GO:0009032">
    <property type="term" value="F:thymidine phosphorylase activity"/>
    <property type="evidence" value="ECO:0007669"/>
    <property type="project" value="UniProtKB-EC"/>
</dbReference>
<dbReference type="GO" id="GO:0004850">
    <property type="term" value="F:uridine phosphorylase activity"/>
    <property type="evidence" value="ECO:0007669"/>
    <property type="project" value="UniProtKB-EC"/>
</dbReference>
<dbReference type="CDD" id="cd20296">
    <property type="entry name" value="cupin_PpnP-like"/>
    <property type="match status" value="1"/>
</dbReference>
<dbReference type="FunFam" id="2.60.120.10:FF:000016">
    <property type="entry name" value="Pyrimidine/purine nucleoside phosphorylase"/>
    <property type="match status" value="1"/>
</dbReference>
<dbReference type="Gene3D" id="2.60.120.10">
    <property type="entry name" value="Jelly Rolls"/>
    <property type="match status" value="1"/>
</dbReference>
<dbReference type="HAMAP" id="MF_01537">
    <property type="entry name" value="Nucleos_phosphorylase_PpnP"/>
    <property type="match status" value="1"/>
</dbReference>
<dbReference type="InterPro" id="IPR009664">
    <property type="entry name" value="Ppnp"/>
</dbReference>
<dbReference type="InterPro" id="IPR014710">
    <property type="entry name" value="RmlC-like_jellyroll"/>
</dbReference>
<dbReference type="InterPro" id="IPR011051">
    <property type="entry name" value="RmlC_Cupin_sf"/>
</dbReference>
<dbReference type="PANTHER" id="PTHR36540">
    <property type="entry name" value="PYRIMIDINE/PURINE NUCLEOSIDE PHOSPHORYLASE"/>
    <property type="match status" value="1"/>
</dbReference>
<dbReference type="PANTHER" id="PTHR36540:SF1">
    <property type="entry name" value="PYRIMIDINE_PURINE NUCLEOSIDE PHOSPHORYLASE"/>
    <property type="match status" value="1"/>
</dbReference>
<dbReference type="Pfam" id="PF06865">
    <property type="entry name" value="Ppnp"/>
    <property type="match status" value="1"/>
</dbReference>
<dbReference type="SUPFAM" id="SSF51182">
    <property type="entry name" value="RmlC-like cupins"/>
    <property type="match status" value="1"/>
</dbReference>
<name>PPNP_SHEB5</name>
<evidence type="ECO:0000255" key="1">
    <source>
        <dbReference type="HAMAP-Rule" id="MF_01537"/>
    </source>
</evidence>
<feature type="chain" id="PRO_1000068737" description="Pyrimidine/purine nucleoside phosphorylase">
    <location>
        <begin position="1"/>
        <end position="103"/>
    </location>
</feature>
<protein>
    <recommendedName>
        <fullName evidence="1">Pyrimidine/purine nucleoside phosphorylase</fullName>
        <ecNumber evidence="1">2.4.2.1</ecNumber>
        <ecNumber evidence="1">2.4.2.2</ecNumber>
    </recommendedName>
    <alternativeName>
        <fullName evidence="1">Adenosine phosphorylase</fullName>
    </alternativeName>
    <alternativeName>
        <fullName evidence="1">Cytidine phosphorylase</fullName>
    </alternativeName>
    <alternativeName>
        <fullName evidence="1">Guanosine phosphorylase</fullName>
    </alternativeName>
    <alternativeName>
        <fullName evidence="1">Inosine phosphorylase</fullName>
    </alternativeName>
    <alternativeName>
        <fullName evidence="1">Thymidine phosphorylase</fullName>
    </alternativeName>
    <alternativeName>
        <fullName evidence="1">Uridine phosphorylase</fullName>
    </alternativeName>
    <alternativeName>
        <fullName evidence="1">Xanthosine phosphorylase</fullName>
    </alternativeName>
</protein>
<accession>A3CZ93</accession>
<sequence>MSLLEQVSVSKKANIYFDGRVASRSVFFADGSKQTLGVVQPGEYEFSTSQGEIMEVISGRFEVLLPETTTWQEFSEGTQFELAANVSFKIRNTAIAEYCCSYL</sequence>
<proteinExistence type="inferred from homology"/>
<keyword id="KW-0328">Glycosyltransferase</keyword>
<keyword id="KW-1185">Reference proteome</keyword>
<keyword id="KW-0808">Transferase</keyword>
<reference key="1">
    <citation type="submission" date="2007-02" db="EMBL/GenBank/DDBJ databases">
        <title>Complete sequence of chromosome of Shewanella baltica OS155.</title>
        <authorList>
            <consortium name="US DOE Joint Genome Institute"/>
            <person name="Copeland A."/>
            <person name="Lucas S."/>
            <person name="Lapidus A."/>
            <person name="Barry K."/>
            <person name="Detter J.C."/>
            <person name="Glavina del Rio T."/>
            <person name="Hammon N."/>
            <person name="Israni S."/>
            <person name="Dalin E."/>
            <person name="Tice H."/>
            <person name="Pitluck S."/>
            <person name="Sims D.R."/>
            <person name="Brettin T."/>
            <person name="Bruce D."/>
            <person name="Han C."/>
            <person name="Tapia R."/>
            <person name="Brainard J."/>
            <person name="Schmutz J."/>
            <person name="Larimer F."/>
            <person name="Land M."/>
            <person name="Hauser L."/>
            <person name="Kyrpides N."/>
            <person name="Mikhailova N."/>
            <person name="Brettar I."/>
            <person name="Klappenbach J."/>
            <person name="Konstantinidis K."/>
            <person name="Rodrigues J."/>
            <person name="Tiedje J."/>
            <person name="Richardson P."/>
        </authorList>
    </citation>
    <scope>NUCLEOTIDE SEQUENCE [LARGE SCALE GENOMIC DNA]</scope>
    <source>
        <strain>OS155 / ATCC BAA-1091</strain>
    </source>
</reference>
<gene>
    <name evidence="1" type="primary">ppnP</name>
    <name type="ordered locus">Sbal_0273</name>
</gene>
<organism>
    <name type="scientific">Shewanella baltica (strain OS155 / ATCC BAA-1091)</name>
    <dbReference type="NCBI Taxonomy" id="325240"/>
    <lineage>
        <taxon>Bacteria</taxon>
        <taxon>Pseudomonadati</taxon>
        <taxon>Pseudomonadota</taxon>
        <taxon>Gammaproteobacteria</taxon>
        <taxon>Alteromonadales</taxon>
        <taxon>Shewanellaceae</taxon>
        <taxon>Shewanella</taxon>
    </lineage>
</organism>
<comment type="function">
    <text evidence="1">Catalyzes the phosphorolysis of diverse nucleosides, yielding D-ribose 1-phosphate and the respective free bases. Can use uridine, adenosine, guanosine, cytidine, thymidine, inosine and xanthosine as substrates. Also catalyzes the reverse reactions.</text>
</comment>
<comment type="catalytic activity">
    <reaction evidence="1">
        <text>a purine D-ribonucleoside + phosphate = a purine nucleobase + alpha-D-ribose 1-phosphate</text>
        <dbReference type="Rhea" id="RHEA:19805"/>
        <dbReference type="ChEBI" id="CHEBI:26386"/>
        <dbReference type="ChEBI" id="CHEBI:43474"/>
        <dbReference type="ChEBI" id="CHEBI:57720"/>
        <dbReference type="ChEBI" id="CHEBI:142355"/>
        <dbReference type="EC" id="2.4.2.1"/>
    </reaction>
</comment>
<comment type="catalytic activity">
    <reaction evidence="1">
        <text>adenosine + phosphate = alpha-D-ribose 1-phosphate + adenine</text>
        <dbReference type="Rhea" id="RHEA:27642"/>
        <dbReference type="ChEBI" id="CHEBI:16335"/>
        <dbReference type="ChEBI" id="CHEBI:16708"/>
        <dbReference type="ChEBI" id="CHEBI:43474"/>
        <dbReference type="ChEBI" id="CHEBI:57720"/>
        <dbReference type="EC" id="2.4.2.1"/>
    </reaction>
</comment>
<comment type="catalytic activity">
    <reaction evidence="1">
        <text>cytidine + phosphate = cytosine + alpha-D-ribose 1-phosphate</text>
        <dbReference type="Rhea" id="RHEA:52540"/>
        <dbReference type="ChEBI" id="CHEBI:16040"/>
        <dbReference type="ChEBI" id="CHEBI:17562"/>
        <dbReference type="ChEBI" id="CHEBI:43474"/>
        <dbReference type="ChEBI" id="CHEBI:57720"/>
        <dbReference type="EC" id="2.4.2.2"/>
    </reaction>
</comment>
<comment type="catalytic activity">
    <reaction evidence="1">
        <text>guanosine + phosphate = alpha-D-ribose 1-phosphate + guanine</text>
        <dbReference type="Rhea" id="RHEA:13233"/>
        <dbReference type="ChEBI" id="CHEBI:16235"/>
        <dbReference type="ChEBI" id="CHEBI:16750"/>
        <dbReference type="ChEBI" id="CHEBI:43474"/>
        <dbReference type="ChEBI" id="CHEBI:57720"/>
        <dbReference type="EC" id="2.4.2.1"/>
    </reaction>
</comment>
<comment type="catalytic activity">
    <reaction evidence="1">
        <text>inosine + phosphate = alpha-D-ribose 1-phosphate + hypoxanthine</text>
        <dbReference type="Rhea" id="RHEA:27646"/>
        <dbReference type="ChEBI" id="CHEBI:17368"/>
        <dbReference type="ChEBI" id="CHEBI:17596"/>
        <dbReference type="ChEBI" id="CHEBI:43474"/>
        <dbReference type="ChEBI" id="CHEBI:57720"/>
        <dbReference type="EC" id="2.4.2.1"/>
    </reaction>
</comment>
<comment type="catalytic activity">
    <reaction evidence="1">
        <text>thymidine + phosphate = 2-deoxy-alpha-D-ribose 1-phosphate + thymine</text>
        <dbReference type="Rhea" id="RHEA:16037"/>
        <dbReference type="ChEBI" id="CHEBI:17748"/>
        <dbReference type="ChEBI" id="CHEBI:17821"/>
        <dbReference type="ChEBI" id="CHEBI:43474"/>
        <dbReference type="ChEBI" id="CHEBI:57259"/>
        <dbReference type="EC" id="2.4.2.2"/>
    </reaction>
</comment>
<comment type="catalytic activity">
    <reaction evidence="1">
        <text>uridine + phosphate = alpha-D-ribose 1-phosphate + uracil</text>
        <dbReference type="Rhea" id="RHEA:24388"/>
        <dbReference type="ChEBI" id="CHEBI:16704"/>
        <dbReference type="ChEBI" id="CHEBI:17568"/>
        <dbReference type="ChEBI" id="CHEBI:43474"/>
        <dbReference type="ChEBI" id="CHEBI:57720"/>
        <dbReference type="EC" id="2.4.2.2"/>
    </reaction>
</comment>
<comment type="catalytic activity">
    <reaction evidence="1">
        <text>xanthosine + phosphate = alpha-D-ribose 1-phosphate + xanthine</text>
        <dbReference type="Rhea" id="RHEA:27638"/>
        <dbReference type="ChEBI" id="CHEBI:17712"/>
        <dbReference type="ChEBI" id="CHEBI:18107"/>
        <dbReference type="ChEBI" id="CHEBI:43474"/>
        <dbReference type="ChEBI" id="CHEBI:57720"/>
        <dbReference type="EC" id="2.4.2.1"/>
    </reaction>
</comment>
<comment type="similarity">
    <text evidence="1">Belongs to the nucleoside phosphorylase PpnP family.</text>
</comment>